<protein>
    <recommendedName>
        <fullName evidence="1">Methionine import ATP-binding protein MetN 2</fullName>
        <ecNumber evidence="1">7.4.2.11</ecNumber>
    </recommendedName>
</protein>
<proteinExistence type="inferred from homology"/>
<gene>
    <name evidence="1" type="primary">metN2</name>
    <name type="ordered locus">ECA2688</name>
</gene>
<sequence>MIQLEGVSVDFSQGKQPSNLAVDNVSLHIQRGEVYGIVGTSGAGKSTLLRTINLLQRPTSGRVLVNGVLISELAGQPLREQRQKIGMIFQHFNLMQTRTVTENVAFSLKAAGKSNAEITLRVPEILSLVGLSDKASSYPAQLSGGQKQRVGIARAIANDPEVLLCDEPTSALDLETSAAILALLKEINEKLGITIVLISHEMSVIKAVCDRVAVMTGGRVVEEGDVFDIFATPQHAFTRQLVSHTLDLALPPRLLEDLQGTLLKILFVGESAEQPVLSDVATRFGVSVNILHGKIEYIGNRALGILVALLTHPSDPEKVAEAVEHIQVRTANVEVLHG</sequence>
<comment type="function">
    <text evidence="1">Part of the ABC transporter complex MetNIQ involved in methionine import. Responsible for energy coupling to the transport system.</text>
</comment>
<comment type="catalytic activity">
    <reaction evidence="1">
        <text>L-methionine(out) + ATP + H2O = L-methionine(in) + ADP + phosphate + H(+)</text>
        <dbReference type="Rhea" id="RHEA:29779"/>
        <dbReference type="ChEBI" id="CHEBI:15377"/>
        <dbReference type="ChEBI" id="CHEBI:15378"/>
        <dbReference type="ChEBI" id="CHEBI:30616"/>
        <dbReference type="ChEBI" id="CHEBI:43474"/>
        <dbReference type="ChEBI" id="CHEBI:57844"/>
        <dbReference type="ChEBI" id="CHEBI:456216"/>
        <dbReference type="EC" id="7.4.2.11"/>
    </reaction>
</comment>
<comment type="catalytic activity">
    <reaction evidence="1">
        <text>D-methionine(out) + ATP + H2O = D-methionine(in) + ADP + phosphate + H(+)</text>
        <dbReference type="Rhea" id="RHEA:29767"/>
        <dbReference type="ChEBI" id="CHEBI:15377"/>
        <dbReference type="ChEBI" id="CHEBI:15378"/>
        <dbReference type="ChEBI" id="CHEBI:30616"/>
        <dbReference type="ChEBI" id="CHEBI:43474"/>
        <dbReference type="ChEBI" id="CHEBI:57932"/>
        <dbReference type="ChEBI" id="CHEBI:456216"/>
        <dbReference type="EC" id="7.4.2.11"/>
    </reaction>
</comment>
<comment type="subunit">
    <text evidence="1">The complex is composed of two ATP-binding proteins (MetN), two transmembrane proteins (MetI) and a solute-binding protein (MetQ).</text>
</comment>
<comment type="subcellular location">
    <subcellularLocation>
        <location evidence="1">Cell inner membrane</location>
        <topology evidence="1">Peripheral membrane protein</topology>
    </subcellularLocation>
</comment>
<comment type="similarity">
    <text evidence="1">Belongs to the ABC transporter superfamily. Methionine importer (TC 3.A.1.24) family.</text>
</comment>
<dbReference type="EC" id="7.4.2.11" evidence="1"/>
<dbReference type="EMBL" id="BX950851">
    <property type="protein sequence ID" value="CAG75588.1"/>
    <property type="molecule type" value="Genomic_DNA"/>
</dbReference>
<dbReference type="RefSeq" id="WP_011094229.1">
    <property type="nucleotide sequence ID" value="NC_004547.2"/>
</dbReference>
<dbReference type="SMR" id="Q6D3Q6"/>
<dbReference type="STRING" id="218491.ECA2688"/>
<dbReference type="KEGG" id="eca:ECA2688"/>
<dbReference type="PATRIC" id="fig|218491.5.peg.2723"/>
<dbReference type="eggNOG" id="COG1135">
    <property type="taxonomic scope" value="Bacteria"/>
</dbReference>
<dbReference type="HOGENOM" id="CLU_000604_1_3_6"/>
<dbReference type="OrthoDB" id="9802264at2"/>
<dbReference type="Proteomes" id="UP000007966">
    <property type="component" value="Chromosome"/>
</dbReference>
<dbReference type="GO" id="GO:0005886">
    <property type="term" value="C:plasma membrane"/>
    <property type="evidence" value="ECO:0007669"/>
    <property type="project" value="UniProtKB-SubCell"/>
</dbReference>
<dbReference type="GO" id="GO:0033232">
    <property type="term" value="F:ABC-type D-methionine transporter activity"/>
    <property type="evidence" value="ECO:0007669"/>
    <property type="project" value="UniProtKB-EC"/>
</dbReference>
<dbReference type="GO" id="GO:0005524">
    <property type="term" value="F:ATP binding"/>
    <property type="evidence" value="ECO:0007669"/>
    <property type="project" value="UniProtKB-KW"/>
</dbReference>
<dbReference type="GO" id="GO:0016887">
    <property type="term" value="F:ATP hydrolysis activity"/>
    <property type="evidence" value="ECO:0007669"/>
    <property type="project" value="InterPro"/>
</dbReference>
<dbReference type="CDD" id="cd03258">
    <property type="entry name" value="ABC_MetN_methionine_transporter"/>
    <property type="match status" value="1"/>
</dbReference>
<dbReference type="FunFam" id="3.40.50.300:FF:000056">
    <property type="entry name" value="Cell division ATP-binding protein FtsE"/>
    <property type="match status" value="1"/>
</dbReference>
<dbReference type="Gene3D" id="3.30.70.260">
    <property type="match status" value="1"/>
</dbReference>
<dbReference type="Gene3D" id="3.40.50.300">
    <property type="entry name" value="P-loop containing nucleotide triphosphate hydrolases"/>
    <property type="match status" value="1"/>
</dbReference>
<dbReference type="InterPro" id="IPR003593">
    <property type="entry name" value="AAA+_ATPase"/>
</dbReference>
<dbReference type="InterPro" id="IPR003439">
    <property type="entry name" value="ABC_transporter-like_ATP-bd"/>
</dbReference>
<dbReference type="InterPro" id="IPR017871">
    <property type="entry name" value="ABC_transporter-like_CS"/>
</dbReference>
<dbReference type="InterPro" id="IPR045865">
    <property type="entry name" value="ACT-like_dom_sf"/>
</dbReference>
<dbReference type="InterPro" id="IPR041701">
    <property type="entry name" value="MetN_ABC"/>
</dbReference>
<dbReference type="InterPro" id="IPR050086">
    <property type="entry name" value="MetN_ABC_transporter-like"/>
</dbReference>
<dbReference type="InterPro" id="IPR018449">
    <property type="entry name" value="NIL_domain"/>
</dbReference>
<dbReference type="InterPro" id="IPR027417">
    <property type="entry name" value="P-loop_NTPase"/>
</dbReference>
<dbReference type="PANTHER" id="PTHR43166">
    <property type="entry name" value="AMINO ACID IMPORT ATP-BINDING PROTEIN"/>
    <property type="match status" value="1"/>
</dbReference>
<dbReference type="PANTHER" id="PTHR43166:SF30">
    <property type="entry name" value="METHIONINE IMPORT ATP-BINDING PROTEIN METN"/>
    <property type="match status" value="1"/>
</dbReference>
<dbReference type="Pfam" id="PF00005">
    <property type="entry name" value="ABC_tran"/>
    <property type="match status" value="1"/>
</dbReference>
<dbReference type="Pfam" id="PF09383">
    <property type="entry name" value="NIL"/>
    <property type="match status" value="1"/>
</dbReference>
<dbReference type="SMART" id="SM00382">
    <property type="entry name" value="AAA"/>
    <property type="match status" value="1"/>
</dbReference>
<dbReference type="SMART" id="SM00930">
    <property type="entry name" value="NIL"/>
    <property type="match status" value="1"/>
</dbReference>
<dbReference type="SUPFAM" id="SSF55021">
    <property type="entry name" value="ACT-like"/>
    <property type="match status" value="1"/>
</dbReference>
<dbReference type="SUPFAM" id="SSF52540">
    <property type="entry name" value="P-loop containing nucleoside triphosphate hydrolases"/>
    <property type="match status" value="1"/>
</dbReference>
<dbReference type="PROSITE" id="PS00211">
    <property type="entry name" value="ABC_TRANSPORTER_1"/>
    <property type="match status" value="1"/>
</dbReference>
<dbReference type="PROSITE" id="PS50893">
    <property type="entry name" value="ABC_TRANSPORTER_2"/>
    <property type="match status" value="1"/>
</dbReference>
<dbReference type="PROSITE" id="PS51264">
    <property type="entry name" value="METN"/>
    <property type="match status" value="1"/>
</dbReference>
<reference key="1">
    <citation type="journal article" date="2004" name="Proc. Natl. Acad. Sci. U.S.A.">
        <title>Genome sequence of the enterobacterial phytopathogen Erwinia carotovora subsp. atroseptica and characterization of virulence factors.</title>
        <authorList>
            <person name="Bell K.S."/>
            <person name="Sebaihia M."/>
            <person name="Pritchard L."/>
            <person name="Holden M.T.G."/>
            <person name="Hyman L.J."/>
            <person name="Holeva M.C."/>
            <person name="Thomson N.R."/>
            <person name="Bentley S.D."/>
            <person name="Churcher L.J.C."/>
            <person name="Mungall K."/>
            <person name="Atkin R."/>
            <person name="Bason N."/>
            <person name="Brooks K."/>
            <person name="Chillingworth T."/>
            <person name="Clark K."/>
            <person name="Doggett J."/>
            <person name="Fraser A."/>
            <person name="Hance Z."/>
            <person name="Hauser H."/>
            <person name="Jagels K."/>
            <person name="Moule S."/>
            <person name="Norbertczak H."/>
            <person name="Ormond D."/>
            <person name="Price C."/>
            <person name="Quail M.A."/>
            <person name="Sanders M."/>
            <person name="Walker D."/>
            <person name="Whitehead S."/>
            <person name="Salmond G.P.C."/>
            <person name="Birch P.R.J."/>
            <person name="Parkhill J."/>
            <person name="Toth I.K."/>
        </authorList>
    </citation>
    <scope>NUCLEOTIDE SEQUENCE [LARGE SCALE GENOMIC DNA]</scope>
    <source>
        <strain>SCRI 1043 / ATCC BAA-672</strain>
    </source>
</reference>
<keyword id="KW-0029">Amino-acid transport</keyword>
<keyword id="KW-0067">ATP-binding</keyword>
<keyword id="KW-0997">Cell inner membrane</keyword>
<keyword id="KW-1003">Cell membrane</keyword>
<keyword id="KW-0472">Membrane</keyword>
<keyword id="KW-0547">Nucleotide-binding</keyword>
<keyword id="KW-1185">Reference proteome</keyword>
<keyword id="KW-1278">Translocase</keyword>
<keyword id="KW-0813">Transport</keyword>
<name>METN2_PECAS</name>
<organism>
    <name type="scientific">Pectobacterium atrosepticum (strain SCRI 1043 / ATCC BAA-672)</name>
    <name type="common">Erwinia carotovora subsp. atroseptica</name>
    <dbReference type="NCBI Taxonomy" id="218491"/>
    <lineage>
        <taxon>Bacteria</taxon>
        <taxon>Pseudomonadati</taxon>
        <taxon>Pseudomonadota</taxon>
        <taxon>Gammaproteobacteria</taxon>
        <taxon>Enterobacterales</taxon>
        <taxon>Pectobacteriaceae</taxon>
        <taxon>Pectobacterium</taxon>
    </lineage>
</organism>
<evidence type="ECO:0000255" key="1">
    <source>
        <dbReference type="HAMAP-Rule" id="MF_01719"/>
    </source>
</evidence>
<feature type="chain" id="PRO_0000270295" description="Methionine import ATP-binding protein MetN 2">
    <location>
        <begin position="1"/>
        <end position="338"/>
    </location>
</feature>
<feature type="domain" description="ABC transporter" evidence="1">
    <location>
        <begin position="2"/>
        <end position="242"/>
    </location>
</feature>
<feature type="binding site" evidence="1">
    <location>
        <begin position="39"/>
        <end position="46"/>
    </location>
    <ligand>
        <name>ATP</name>
        <dbReference type="ChEBI" id="CHEBI:30616"/>
    </ligand>
</feature>
<accession>Q6D3Q6</accession>